<organism>
    <name type="scientific">Salmonella agona (strain SL483)</name>
    <dbReference type="NCBI Taxonomy" id="454166"/>
    <lineage>
        <taxon>Bacteria</taxon>
        <taxon>Pseudomonadati</taxon>
        <taxon>Pseudomonadota</taxon>
        <taxon>Gammaproteobacteria</taxon>
        <taxon>Enterobacterales</taxon>
        <taxon>Enterobacteriaceae</taxon>
        <taxon>Salmonella</taxon>
    </lineage>
</organism>
<evidence type="ECO:0000255" key="1">
    <source>
        <dbReference type="HAMAP-Rule" id="MF_00204"/>
    </source>
</evidence>
<dbReference type="EMBL" id="CP001138">
    <property type="protein sequence ID" value="ACH52072.1"/>
    <property type="molecule type" value="Genomic_DNA"/>
</dbReference>
<dbReference type="RefSeq" id="WP_000042502.1">
    <property type="nucleotide sequence ID" value="NC_011149.1"/>
</dbReference>
<dbReference type="SMR" id="B5F076"/>
<dbReference type="KEGG" id="sea:SeAg_B0834"/>
<dbReference type="HOGENOM" id="CLU_009621_2_1_6"/>
<dbReference type="Proteomes" id="UP000008819">
    <property type="component" value="Chromosome"/>
</dbReference>
<dbReference type="GO" id="GO:0005737">
    <property type="term" value="C:cytoplasm"/>
    <property type="evidence" value="ECO:0007669"/>
    <property type="project" value="UniProtKB-SubCell"/>
</dbReference>
<dbReference type="GO" id="GO:0009380">
    <property type="term" value="C:excinuclease repair complex"/>
    <property type="evidence" value="ECO:0007669"/>
    <property type="project" value="InterPro"/>
</dbReference>
<dbReference type="GO" id="GO:0005524">
    <property type="term" value="F:ATP binding"/>
    <property type="evidence" value="ECO:0007669"/>
    <property type="project" value="UniProtKB-UniRule"/>
</dbReference>
<dbReference type="GO" id="GO:0016887">
    <property type="term" value="F:ATP hydrolysis activity"/>
    <property type="evidence" value="ECO:0007669"/>
    <property type="project" value="InterPro"/>
</dbReference>
<dbReference type="GO" id="GO:0003677">
    <property type="term" value="F:DNA binding"/>
    <property type="evidence" value="ECO:0007669"/>
    <property type="project" value="UniProtKB-UniRule"/>
</dbReference>
<dbReference type="GO" id="GO:0009381">
    <property type="term" value="F:excinuclease ABC activity"/>
    <property type="evidence" value="ECO:0007669"/>
    <property type="project" value="UniProtKB-UniRule"/>
</dbReference>
<dbReference type="GO" id="GO:0004386">
    <property type="term" value="F:helicase activity"/>
    <property type="evidence" value="ECO:0007669"/>
    <property type="project" value="UniProtKB-KW"/>
</dbReference>
<dbReference type="GO" id="GO:0006289">
    <property type="term" value="P:nucleotide-excision repair"/>
    <property type="evidence" value="ECO:0007669"/>
    <property type="project" value="UniProtKB-UniRule"/>
</dbReference>
<dbReference type="GO" id="GO:0009432">
    <property type="term" value="P:SOS response"/>
    <property type="evidence" value="ECO:0007669"/>
    <property type="project" value="UniProtKB-UniRule"/>
</dbReference>
<dbReference type="CDD" id="cd17916">
    <property type="entry name" value="DEXHc_UvrB"/>
    <property type="match status" value="1"/>
</dbReference>
<dbReference type="CDD" id="cd18790">
    <property type="entry name" value="SF2_C_UvrB"/>
    <property type="match status" value="1"/>
</dbReference>
<dbReference type="FunFam" id="3.40.50.300:FF:000257">
    <property type="entry name" value="UvrABC system protein B"/>
    <property type="match status" value="1"/>
</dbReference>
<dbReference type="FunFam" id="3.40.50.300:FF:000401">
    <property type="entry name" value="UvrABC system protein B"/>
    <property type="match status" value="1"/>
</dbReference>
<dbReference type="FunFam" id="3.40.50.300:FF:000477">
    <property type="entry name" value="UvrABC system protein B"/>
    <property type="match status" value="1"/>
</dbReference>
<dbReference type="Gene3D" id="6.10.140.240">
    <property type="match status" value="1"/>
</dbReference>
<dbReference type="Gene3D" id="3.40.50.300">
    <property type="entry name" value="P-loop containing nucleotide triphosphate hydrolases"/>
    <property type="match status" value="3"/>
</dbReference>
<dbReference type="Gene3D" id="4.10.860.10">
    <property type="entry name" value="UVR domain"/>
    <property type="match status" value="1"/>
</dbReference>
<dbReference type="HAMAP" id="MF_00204">
    <property type="entry name" value="UvrB"/>
    <property type="match status" value="1"/>
</dbReference>
<dbReference type="InterPro" id="IPR006935">
    <property type="entry name" value="Helicase/UvrB_N"/>
</dbReference>
<dbReference type="InterPro" id="IPR014001">
    <property type="entry name" value="Helicase_ATP-bd"/>
</dbReference>
<dbReference type="InterPro" id="IPR001650">
    <property type="entry name" value="Helicase_C-like"/>
</dbReference>
<dbReference type="InterPro" id="IPR027417">
    <property type="entry name" value="P-loop_NTPase"/>
</dbReference>
<dbReference type="InterPro" id="IPR001943">
    <property type="entry name" value="UVR_dom"/>
</dbReference>
<dbReference type="InterPro" id="IPR036876">
    <property type="entry name" value="UVR_dom_sf"/>
</dbReference>
<dbReference type="InterPro" id="IPR004807">
    <property type="entry name" value="UvrB"/>
</dbReference>
<dbReference type="InterPro" id="IPR041471">
    <property type="entry name" value="UvrB_inter"/>
</dbReference>
<dbReference type="InterPro" id="IPR024759">
    <property type="entry name" value="UvrB_YAD/RRR_dom"/>
</dbReference>
<dbReference type="NCBIfam" id="NF003673">
    <property type="entry name" value="PRK05298.1"/>
    <property type="match status" value="1"/>
</dbReference>
<dbReference type="NCBIfam" id="TIGR00631">
    <property type="entry name" value="uvrb"/>
    <property type="match status" value="1"/>
</dbReference>
<dbReference type="PANTHER" id="PTHR24029">
    <property type="entry name" value="UVRABC SYSTEM PROTEIN B"/>
    <property type="match status" value="1"/>
</dbReference>
<dbReference type="PANTHER" id="PTHR24029:SF0">
    <property type="entry name" value="UVRABC SYSTEM PROTEIN B"/>
    <property type="match status" value="1"/>
</dbReference>
<dbReference type="Pfam" id="PF00271">
    <property type="entry name" value="Helicase_C"/>
    <property type="match status" value="1"/>
</dbReference>
<dbReference type="Pfam" id="PF04851">
    <property type="entry name" value="ResIII"/>
    <property type="match status" value="1"/>
</dbReference>
<dbReference type="Pfam" id="PF02151">
    <property type="entry name" value="UVR"/>
    <property type="match status" value="1"/>
</dbReference>
<dbReference type="Pfam" id="PF12344">
    <property type="entry name" value="UvrB"/>
    <property type="match status" value="1"/>
</dbReference>
<dbReference type="Pfam" id="PF17757">
    <property type="entry name" value="UvrB_inter"/>
    <property type="match status" value="1"/>
</dbReference>
<dbReference type="SMART" id="SM00487">
    <property type="entry name" value="DEXDc"/>
    <property type="match status" value="1"/>
</dbReference>
<dbReference type="SMART" id="SM00490">
    <property type="entry name" value="HELICc"/>
    <property type="match status" value="1"/>
</dbReference>
<dbReference type="SUPFAM" id="SSF46600">
    <property type="entry name" value="C-terminal UvrC-binding domain of UvrB"/>
    <property type="match status" value="1"/>
</dbReference>
<dbReference type="SUPFAM" id="SSF52540">
    <property type="entry name" value="P-loop containing nucleoside triphosphate hydrolases"/>
    <property type="match status" value="2"/>
</dbReference>
<dbReference type="PROSITE" id="PS51192">
    <property type="entry name" value="HELICASE_ATP_BIND_1"/>
    <property type="match status" value="1"/>
</dbReference>
<dbReference type="PROSITE" id="PS51194">
    <property type="entry name" value="HELICASE_CTER"/>
    <property type="match status" value="1"/>
</dbReference>
<dbReference type="PROSITE" id="PS50151">
    <property type="entry name" value="UVR"/>
    <property type="match status" value="1"/>
</dbReference>
<reference key="1">
    <citation type="journal article" date="2011" name="J. Bacteriol.">
        <title>Comparative genomics of 28 Salmonella enterica isolates: evidence for CRISPR-mediated adaptive sublineage evolution.</title>
        <authorList>
            <person name="Fricke W.F."/>
            <person name="Mammel M.K."/>
            <person name="McDermott P.F."/>
            <person name="Tartera C."/>
            <person name="White D.G."/>
            <person name="Leclerc J.E."/>
            <person name="Ravel J."/>
            <person name="Cebula T.A."/>
        </authorList>
    </citation>
    <scope>NUCLEOTIDE SEQUENCE [LARGE SCALE GENOMIC DNA]</scope>
    <source>
        <strain>SL483</strain>
    </source>
</reference>
<accession>B5F076</accession>
<protein>
    <recommendedName>
        <fullName evidence="1">UvrABC system protein B</fullName>
        <shortName evidence="1">Protein UvrB</shortName>
    </recommendedName>
    <alternativeName>
        <fullName evidence="1">Excinuclease ABC subunit B</fullName>
    </alternativeName>
</protein>
<sequence>MSKPFKLNSAFKPSGDQPDAIRRLEEGLEDGLAHQTLLGVTGSGKTFTIANVIADLQRPTMVLAPNKTLAAQLYGEMKEFFPENAVEYFVSYYDYYQPEAYVPSSDTFIEKDASVNEHIEQMRLSATKALLERRDVVVVASVSAIYGLGDPDLYLKMMLHLTVGMLIDQRAILRRLAELQYTRNDQAFQRGTFRVRGEVIDIFPAESDDIALRVELFDEEVERLSLFDPLTGQVESTVPRYTIYPKTHYVTPRERILQAMEEIKDELADRRKVLLANNKLLEEQRLSQRTQFDLEMMNELGYCSGIENYSRFLSGRGPGEPPPTLFDYLPADGLLVVDESHVTIPQIGGMYRGDRARKETLVEYGFRLPSALDNRPLKFEEFEALAPQTIYVSATPGNYELEKSGDEVVDQVVRPTGLLDPIIEVRPVATQVDDLLSEIRQRAAINERVLVTTLTKRMAEDLTEYLEEHGERVRYLHSDIDTVERMEIIRDLRLGEFDVLVGINLLREGLDMPEVSLVAILDADKEGFLRSERSLIQTIGRAARNVNGKAILYGDKITPSMAKAIGETERRREKQQKYNEEHGITPQGLNKKVVDILALGQNIAKTKAKGKGKGRSTAKAGIVELDMTPKALQQKIHELEGQMMQHAQNLEFEEAAQIRDQLHQLRELFIAAS</sequence>
<comment type="function">
    <text evidence="1">The UvrABC repair system catalyzes the recognition and processing of DNA lesions. A damage recognition complex composed of 2 UvrA and 2 UvrB subunits scans DNA for abnormalities. Upon binding of the UvrA(2)B(2) complex to a putative damaged site, the DNA wraps around one UvrB monomer. DNA wrap is dependent on ATP binding by UvrB and probably causes local melting of the DNA helix, facilitating insertion of UvrB beta-hairpin between the DNA strands. Then UvrB probes one DNA strand for the presence of a lesion. If a lesion is found the UvrA subunits dissociate and the UvrB-DNA preincision complex is formed. This complex is subsequently bound by UvrC and the second UvrB is released. If no lesion is found, the DNA wraps around the other UvrB subunit that will check the other stand for damage.</text>
</comment>
<comment type="subunit">
    <text evidence="1">Forms a heterotetramer with UvrA during the search for lesions. Interacts with UvrC in an incision complex.</text>
</comment>
<comment type="subcellular location">
    <subcellularLocation>
        <location evidence="1">Cytoplasm</location>
    </subcellularLocation>
</comment>
<comment type="domain">
    <text evidence="1">The beta-hairpin motif is involved in DNA binding.</text>
</comment>
<comment type="similarity">
    <text evidence="1">Belongs to the UvrB family.</text>
</comment>
<proteinExistence type="inferred from homology"/>
<name>UVRB_SALA4</name>
<gene>
    <name evidence="1" type="primary">uvrB</name>
    <name type="ordered locus">SeAg_B0834</name>
</gene>
<feature type="chain" id="PRO_1000099560" description="UvrABC system protein B">
    <location>
        <begin position="1"/>
        <end position="673"/>
    </location>
</feature>
<feature type="domain" description="Helicase ATP-binding" evidence="1">
    <location>
        <begin position="26"/>
        <end position="183"/>
    </location>
</feature>
<feature type="domain" description="Helicase C-terminal" evidence="1">
    <location>
        <begin position="431"/>
        <end position="597"/>
    </location>
</feature>
<feature type="domain" description="UVR" evidence="1">
    <location>
        <begin position="633"/>
        <end position="668"/>
    </location>
</feature>
<feature type="short sequence motif" description="Beta-hairpin">
    <location>
        <begin position="92"/>
        <end position="115"/>
    </location>
</feature>
<feature type="binding site" evidence="1">
    <location>
        <begin position="39"/>
        <end position="46"/>
    </location>
    <ligand>
        <name>ATP</name>
        <dbReference type="ChEBI" id="CHEBI:30616"/>
    </ligand>
</feature>
<keyword id="KW-0067">ATP-binding</keyword>
<keyword id="KW-0963">Cytoplasm</keyword>
<keyword id="KW-0227">DNA damage</keyword>
<keyword id="KW-0228">DNA excision</keyword>
<keyword id="KW-0234">DNA repair</keyword>
<keyword id="KW-0267">Excision nuclease</keyword>
<keyword id="KW-0347">Helicase</keyword>
<keyword id="KW-0378">Hydrolase</keyword>
<keyword id="KW-0547">Nucleotide-binding</keyword>
<keyword id="KW-0742">SOS response</keyword>